<dbReference type="EC" id="4.2.3.5" evidence="1"/>
<dbReference type="EMBL" id="CP001096">
    <property type="protein sequence ID" value="ACE99933.1"/>
    <property type="molecule type" value="Genomic_DNA"/>
</dbReference>
<dbReference type="RefSeq" id="WP_012494891.1">
    <property type="nucleotide sequence ID" value="NC_011004.1"/>
</dbReference>
<dbReference type="SMR" id="B3QIL0"/>
<dbReference type="KEGG" id="rpt:Rpal_1394"/>
<dbReference type="HOGENOM" id="CLU_034547_0_0_5"/>
<dbReference type="OrthoDB" id="9771806at2"/>
<dbReference type="UniPathway" id="UPA00053">
    <property type="reaction ID" value="UER00090"/>
</dbReference>
<dbReference type="Proteomes" id="UP000001725">
    <property type="component" value="Chromosome"/>
</dbReference>
<dbReference type="GO" id="GO:0005829">
    <property type="term" value="C:cytosol"/>
    <property type="evidence" value="ECO:0007669"/>
    <property type="project" value="TreeGrafter"/>
</dbReference>
<dbReference type="GO" id="GO:0004107">
    <property type="term" value="F:chorismate synthase activity"/>
    <property type="evidence" value="ECO:0007669"/>
    <property type="project" value="UniProtKB-UniRule"/>
</dbReference>
<dbReference type="GO" id="GO:0010181">
    <property type="term" value="F:FMN binding"/>
    <property type="evidence" value="ECO:0007669"/>
    <property type="project" value="TreeGrafter"/>
</dbReference>
<dbReference type="GO" id="GO:0008652">
    <property type="term" value="P:amino acid biosynthetic process"/>
    <property type="evidence" value="ECO:0007669"/>
    <property type="project" value="UniProtKB-KW"/>
</dbReference>
<dbReference type="GO" id="GO:0009073">
    <property type="term" value="P:aromatic amino acid family biosynthetic process"/>
    <property type="evidence" value="ECO:0007669"/>
    <property type="project" value="UniProtKB-KW"/>
</dbReference>
<dbReference type="GO" id="GO:0009423">
    <property type="term" value="P:chorismate biosynthetic process"/>
    <property type="evidence" value="ECO:0007669"/>
    <property type="project" value="UniProtKB-UniRule"/>
</dbReference>
<dbReference type="CDD" id="cd07304">
    <property type="entry name" value="Chorismate_synthase"/>
    <property type="match status" value="1"/>
</dbReference>
<dbReference type="Gene3D" id="3.60.150.10">
    <property type="entry name" value="Chorismate synthase AroC"/>
    <property type="match status" value="1"/>
</dbReference>
<dbReference type="HAMAP" id="MF_00300">
    <property type="entry name" value="Chorismate_synth"/>
    <property type="match status" value="1"/>
</dbReference>
<dbReference type="InterPro" id="IPR000453">
    <property type="entry name" value="Chorismate_synth"/>
</dbReference>
<dbReference type="InterPro" id="IPR035904">
    <property type="entry name" value="Chorismate_synth_AroC_sf"/>
</dbReference>
<dbReference type="InterPro" id="IPR020541">
    <property type="entry name" value="Chorismate_synthase_CS"/>
</dbReference>
<dbReference type="NCBIfam" id="TIGR00033">
    <property type="entry name" value="aroC"/>
    <property type="match status" value="1"/>
</dbReference>
<dbReference type="NCBIfam" id="NF003793">
    <property type="entry name" value="PRK05382.1"/>
    <property type="match status" value="1"/>
</dbReference>
<dbReference type="PANTHER" id="PTHR21085">
    <property type="entry name" value="CHORISMATE SYNTHASE"/>
    <property type="match status" value="1"/>
</dbReference>
<dbReference type="PANTHER" id="PTHR21085:SF0">
    <property type="entry name" value="CHORISMATE SYNTHASE"/>
    <property type="match status" value="1"/>
</dbReference>
<dbReference type="Pfam" id="PF01264">
    <property type="entry name" value="Chorismate_synt"/>
    <property type="match status" value="1"/>
</dbReference>
<dbReference type="PIRSF" id="PIRSF001456">
    <property type="entry name" value="Chorismate_synth"/>
    <property type="match status" value="1"/>
</dbReference>
<dbReference type="SUPFAM" id="SSF103263">
    <property type="entry name" value="Chorismate synthase, AroC"/>
    <property type="match status" value="1"/>
</dbReference>
<dbReference type="PROSITE" id="PS00787">
    <property type="entry name" value="CHORISMATE_SYNTHASE_1"/>
    <property type="match status" value="1"/>
</dbReference>
<dbReference type="PROSITE" id="PS00788">
    <property type="entry name" value="CHORISMATE_SYNTHASE_2"/>
    <property type="match status" value="1"/>
</dbReference>
<dbReference type="PROSITE" id="PS00789">
    <property type="entry name" value="CHORISMATE_SYNTHASE_3"/>
    <property type="match status" value="1"/>
</dbReference>
<feature type="chain" id="PRO_1000115390" description="Chorismate synthase">
    <location>
        <begin position="1"/>
        <end position="362"/>
    </location>
</feature>
<feature type="binding site" evidence="1">
    <location>
        <position position="48"/>
    </location>
    <ligand>
        <name>NADP(+)</name>
        <dbReference type="ChEBI" id="CHEBI:58349"/>
    </ligand>
</feature>
<feature type="binding site" evidence="1">
    <location>
        <position position="54"/>
    </location>
    <ligand>
        <name>NADP(+)</name>
        <dbReference type="ChEBI" id="CHEBI:58349"/>
    </ligand>
</feature>
<feature type="binding site" evidence="1">
    <location>
        <begin position="131"/>
        <end position="133"/>
    </location>
    <ligand>
        <name>FMN</name>
        <dbReference type="ChEBI" id="CHEBI:58210"/>
    </ligand>
</feature>
<feature type="binding site" evidence="1">
    <location>
        <begin position="243"/>
        <end position="244"/>
    </location>
    <ligand>
        <name>FMN</name>
        <dbReference type="ChEBI" id="CHEBI:58210"/>
    </ligand>
</feature>
<feature type="binding site" evidence="1">
    <location>
        <position position="287"/>
    </location>
    <ligand>
        <name>FMN</name>
        <dbReference type="ChEBI" id="CHEBI:58210"/>
    </ligand>
</feature>
<feature type="binding site" evidence="1">
    <location>
        <begin position="302"/>
        <end position="306"/>
    </location>
    <ligand>
        <name>FMN</name>
        <dbReference type="ChEBI" id="CHEBI:58210"/>
    </ligand>
</feature>
<feature type="binding site" evidence="1">
    <location>
        <position position="328"/>
    </location>
    <ligand>
        <name>FMN</name>
        <dbReference type="ChEBI" id="CHEBI:58210"/>
    </ligand>
</feature>
<proteinExistence type="inferred from homology"/>
<name>AROC_RHOPT</name>
<accession>B3QIL0</accession>
<organism>
    <name type="scientific">Rhodopseudomonas palustris (strain TIE-1)</name>
    <dbReference type="NCBI Taxonomy" id="395960"/>
    <lineage>
        <taxon>Bacteria</taxon>
        <taxon>Pseudomonadati</taxon>
        <taxon>Pseudomonadota</taxon>
        <taxon>Alphaproteobacteria</taxon>
        <taxon>Hyphomicrobiales</taxon>
        <taxon>Nitrobacteraceae</taxon>
        <taxon>Rhodopseudomonas</taxon>
    </lineage>
</organism>
<gene>
    <name evidence="1" type="primary">aroC</name>
    <name type="ordered locus">Rpal_1394</name>
</gene>
<evidence type="ECO:0000255" key="1">
    <source>
        <dbReference type="HAMAP-Rule" id="MF_00300"/>
    </source>
</evidence>
<reference key="1">
    <citation type="submission" date="2008-05" db="EMBL/GenBank/DDBJ databases">
        <title>Complete sequence of Rhodopseudomonas palustris TIE-1.</title>
        <authorList>
            <consortium name="US DOE Joint Genome Institute"/>
            <person name="Lucas S."/>
            <person name="Copeland A."/>
            <person name="Lapidus A."/>
            <person name="Glavina del Rio T."/>
            <person name="Dalin E."/>
            <person name="Tice H."/>
            <person name="Pitluck S."/>
            <person name="Chain P."/>
            <person name="Malfatti S."/>
            <person name="Shin M."/>
            <person name="Vergez L."/>
            <person name="Lang D."/>
            <person name="Schmutz J."/>
            <person name="Larimer F."/>
            <person name="Land M."/>
            <person name="Hauser L."/>
            <person name="Kyrpides N."/>
            <person name="Mikhailova N."/>
            <person name="Emerson D."/>
            <person name="Newman D.K."/>
            <person name="Roden E."/>
            <person name="Richardson P."/>
        </authorList>
    </citation>
    <scope>NUCLEOTIDE SEQUENCE [LARGE SCALE GENOMIC DNA]</scope>
    <source>
        <strain>TIE-1</strain>
    </source>
</reference>
<keyword id="KW-0028">Amino-acid biosynthesis</keyword>
<keyword id="KW-0057">Aromatic amino acid biosynthesis</keyword>
<keyword id="KW-0274">FAD</keyword>
<keyword id="KW-0285">Flavoprotein</keyword>
<keyword id="KW-0288">FMN</keyword>
<keyword id="KW-0456">Lyase</keyword>
<keyword id="KW-0521">NADP</keyword>
<sequence length="362" mass="38543">MSFNTFGHLFRVTTFGESHGVAIGCVVDGCPPLIPLTEADIQGDLDRRRPGQSRFTTQRQEADQVKILSGVMVHPETGVQVTTGTPIALLIENTDQRSKDYSDIQNKYRPGHADFTYEAKYGIRDYRGGGRSSARETATRVAAGAIARKVIAGMTVRGALVQIGPHKIDRDKWDWDEIGNNPFFCPDKDKAAFYADYLDGIRKSGSSIGAVVEIVAEGVPAGLGAPIYAKLDGDLAAALMSINAVKGVEIGDGFASAELTGEQNADEMRTGNHGPAFLSNHAGGILGGISTGQPVVARFAVKPTSSILTPRKTVDRTGHDTEILTKGRHDPCVGIRAVPVGEAMVACVLADHLLRHRGQVGG</sequence>
<comment type="function">
    <text evidence="1">Catalyzes the anti-1,4-elimination of the C-3 phosphate and the C-6 proR hydrogen from 5-enolpyruvylshikimate-3-phosphate (EPSP) to yield chorismate, which is the branch point compound that serves as the starting substrate for the three terminal pathways of aromatic amino acid biosynthesis. This reaction introduces a second double bond into the aromatic ring system.</text>
</comment>
<comment type="catalytic activity">
    <reaction evidence="1">
        <text>5-O-(1-carboxyvinyl)-3-phosphoshikimate = chorismate + phosphate</text>
        <dbReference type="Rhea" id="RHEA:21020"/>
        <dbReference type="ChEBI" id="CHEBI:29748"/>
        <dbReference type="ChEBI" id="CHEBI:43474"/>
        <dbReference type="ChEBI" id="CHEBI:57701"/>
        <dbReference type="EC" id="4.2.3.5"/>
    </reaction>
</comment>
<comment type="cofactor">
    <cofactor evidence="1">
        <name>FMNH2</name>
        <dbReference type="ChEBI" id="CHEBI:57618"/>
    </cofactor>
    <text evidence="1">Reduced FMN (FMNH(2)).</text>
</comment>
<comment type="pathway">
    <text evidence="1">Metabolic intermediate biosynthesis; chorismate biosynthesis; chorismate from D-erythrose 4-phosphate and phosphoenolpyruvate: step 7/7.</text>
</comment>
<comment type="subunit">
    <text evidence="1">Homotetramer.</text>
</comment>
<comment type="similarity">
    <text evidence="1">Belongs to the chorismate synthase family.</text>
</comment>
<protein>
    <recommendedName>
        <fullName evidence="1">Chorismate synthase</fullName>
        <shortName evidence="1">CS</shortName>
        <ecNumber evidence="1">4.2.3.5</ecNumber>
    </recommendedName>
    <alternativeName>
        <fullName evidence="1">5-enolpyruvylshikimate-3-phosphate phospholyase</fullName>
    </alternativeName>
</protein>